<name>PRSA_STRS7</name>
<gene>
    <name evidence="1" type="primary">prsA</name>
    <name type="ordered locus">SZO_13310</name>
</gene>
<proteinExistence type="inferred from homology"/>
<evidence type="ECO:0000255" key="1">
    <source>
        <dbReference type="HAMAP-Rule" id="MF_01145"/>
    </source>
</evidence>
<evidence type="ECO:0000256" key="2">
    <source>
        <dbReference type="SAM" id="MobiDB-lite"/>
    </source>
</evidence>
<comment type="function">
    <text evidence="1">Plays a major role in protein secretion by helping the post-translocational extracellular folding of several secreted proteins.</text>
</comment>
<comment type="catalytic activity">
    <reaction evidence="1">
        <text>[protein]-peptidylproline (omega=180) = [protein]-peptidylproline (omega=0)</text>
        <dbReference type="Rhea" id="RHEA:16237"/>
        <dbReference type="Rhea" id="RHEA-COMP:10747"/>
        <dbReference type="Rhea" id="RHEA-COMP:10748"/>
        <dbReference type="ChEBI" id="CHEBI:83833"/>
        <dbReference type="ChEBI" id="CHEBI:83834"/>
        <dbReference type="EC" id="5.2.1.8"/>
    </reaction>
</comment>
<comment type="subcellular location">
    <subcellularLocation>
        <location evidence="1">Cell membrane</location>
        <topology evidence="1">Lipid-anchor</topology>
    </subcellularLocation>
</comment>
<comment type="similarity">
    <text evidence="1">Belongs to the PrsA family.</text>
</comment>
<sequence>MKKSTKLLAGIVTLASAMTLAACQSTNDNTSVITMKGDTISVSDFYNETKNTEVSQRAMLNLVVSRVFEDQYGKKVSKKKTEEAYNKSAEQYGASFSAALAQSGLTTDTYKRQIRSAMLVEYAVKEAAKKELTDADYKKAYESYTPEMTTQVITLDNEETAKAILGEVKAEGADFAAIAKEKTTAADKKVDYKFDSGDTKLPADVIKAASGLKEGDISEVVSVLDPATYQNKFYIVKVTKKAEKASDWKKYKKRLKEIVLAEKTQNIDFQNKVIAKALDKANVKIKDQAFANILAQYANTDKKASKANTSKSDQKTSSDSSKDSQSSKSKSEK</sequence>
<protein>
    <recommendedName>
        <fullName evidence="1">Foldase protein PrsA</fullName>
        <ecNumber evidence="1">5.2.1.8</ecNumber>
    </recommendedName>
</protein>
<feature type="signal peptide" evidence="1">
    <location>
        <begin position="1"/>
        <end position="22"/>
    </location>
</feature>
<feature type="chain" id="PRO_5000453429" description="Foldase protein PrsA">
    <location>
        <begin position="23"/>
        <end position="333"/>
    </location>
</feature>
<feature type="domain" description="PpiC" evidence="1">
    <location>
        <begin position="145"/>
        <end position="240"/>
    </location>
</feature>
<feature type="region of interest" description="Disordered" evidence="2">
    <location>
        <begin position="301"/>
        <end position="333"/>
    </location>
</feature>
<feature type="compositionally biased region" description="Basic and acidic residues" evidence="2">
    <location>
        <begin position="312"/>
        <end position="322"/>
    </location>
</feature>
<feature type="compositionally biased region" description="Low complexity" evidence="2">
    <location>
        <begin position="323"/>
        <end position="333"/>
    </location>
</feature>
<feature type="lipid moiety-binding region" description="N-palmitoyl cysteine" evidence="1">
    <location>
        <position position="23"/>
    </location>
</feature>
<feature type="lipid moiety-binding region" description="S-diacylglycerol cysteine" evidence="1">
    <location>
        <position position="23"/>
    </location>
</feature>
<organism>
    <name type="scientific">Streptococcus equi subsp. zooepidemicus (strain H70)</name>
    <dbReference type="NCBI Taxonomy" id="553483"/>
    <lineage>
        <taxon>Bacteria</taxon>
        <taxon>Bacillati</taxon>
        <taxon>Bacillota</taxon>
        <taxon>Bacilli</taxon>
        <taxon>Lactobacillales</taxon>
        <taxon>Streptococcaceae</taxon>
        <taxon>Streptococcus</taxon>
    </lineage>
</organism>
<accession>C0MCT3</accession>
<keyword id="KW-1003">Cell membrane</keyword>
<keyword id="KW-0413">Isomerase</keyword>
<keyword id="KW-0449">Lipoprotein</keyword>
<keyword id="KW-0472">Membrane</keyword>
<keyword id="KW-0564">Palmitate</keyword>
<keyword id="KW-0697">Rotamase</keyword>
<keyword id="KW-0732">Signal</keyword>
<dbReference type="EC" id="5.2.1.8" evidence="1"/>
<dbReference type="EMBL" id="FM204884">
    <property type="protein sequence ID" value="CAW99882.1"/>
    <property type="molecule type" value="Genomic_DNA"/>
</dbReference>
<dbReference type="SMR" id="C0MCT3"/>
<dbReference type="KEGG" id="seq:SZO_13310"/>
<dbReference type="PATRIC" id="fig|40041.11.peg.1413"/>
<dbReference type="eggNOG" id="COG0760">
    <property type="taxonomic scope" value="Bacteria"/>
</dbReference>
<dbReference type="HOGENOM" id="CLU_034646_6_0_9"/>
<dbReference type="Proteomes" id="UP000001368">
    <property type="component" value="Chromosome"/>
</dbReference>
<dbReference type="GO" id="GO:0005886">
    <property type="term" value="C:plasma membrane"/>
    <property type="evidence" value="ECO:0007669"/>
    <property type="project" value="UniProtKB-SubCell"/>
</dbReference>
<dbReference type="GO" id="GO:0003755">
    <property type="term" value="F:peptidyl-prolyl cis-trans isomerase activity"/>
    <property type="evidence" value="ECO:0007669"/>
    <property type="project" value="UniProtKB-UniRule"/>
</dbReference>
<dbReference type="GO" id="GO:0006457">
    <property type="term" value="P:protein folding"/>
    <property type="evidence" value="ECO:0007669"/>
    <property type="project" value="UniProtKB-UniRule"/>
</dbReference>
<dbReference type="Gene3D" id="3.10.50.40">
    <property type="match status" value="1"/>
</dbReference>
<dbReference type="HAMAP" id="MF_01145">
    <property type="entry name" value="Foldase_PrsA"/>
    <property type="match status" value="1"/>
</dbReference>
<dbReference type="InterPro" id="IPR023059">
    <property type="entry name" value="Foldase_PrsA"/>
</dbReference>
<dbReference type="InterPro" id="IPR046357">
    <property type="entry name" value="PPIase_dom_sf"/>
</dbReference>
<dbReference type="InterPro" id="IPR000297">
    <property type="entry name" value="PPIase_PpiC"/>
</dbReference>
<dbReference type="InterPro" id="IPR050245">
    <property type="entry name" value="PrsA_foldase"/>
</dbReference>
<dbReference type="InterPro" id="IPR027304">
    <property type="entry name" value="Trigger_fact/SurA_dom_sf"/>
</dbReference>
<dbReference type="NCBIfam" id="NF002361">
    <property type="entry name" value="PRK01326.1"/>
    <property type="match status" value="1"/>
</dbReference>
<dbReference type="NCBIfam" id="NF009105">
    <property type="entry name" value="PRK12450.1"/>
    <property type="match status" value="1"/>
</dbReference>
<dbReference type="PANTHER" id="PTHR47245:SF1">
    <property type="entry name" value="FOLDASE PROTEIN PRSA"/>
    <property type="match status" value="1"/>
</dbReference>
<dbReference type="PANTHER" id="PTHR47245">
    <property type="entry name" value="PEPTIDYLPROLYL ISOMERASE"/>
    <property type="match status" value="1"/>
</dbReference>
<dbReference type="Pfam" id="PF13145">
    <property type="entry name" value="Rotamase_2"/>
    <property type="match status" value="1"/>
</dbReference>
<dbReference type="SUPFAM" id="SSF54534">
    <property type="entry name" value="FKBP-like"/>
    <property type="match status" value="1"/>
</dbReference>
<dbReference type="SUPFAM" id="SSF109998">
    <property type="entry name" value="Triger factor/SurA peptide-binding domain-like"/>
    <property type="match status" value="1"/>
</dbReference>
<dbReference type="PROSITE" id="PS50198">
    <property type="entry name" value="PPIC_PPIASE_2"/>
    <property type="match status" value="1"/>
</dbReference>
<dbReference type="PROSITE" id="PS51257">
    <property type="entry name" value="PROKAR_LIPOPROTEIN"/>
    <property type="match status" value="1"/>
</dbReference>
<reference key="1">
    <citation type="journal article" date="2009" name="PLoS Pathog.">
        <title>Genomic evidence for the evolution of Streptococcus equi: host restriction, increased virulence, and genetic exchange with human pathogens.</title>
        <authorList>
            <person name="Holden M.T.G."/>
            <person name="Heather Z."/>
            <person name="Paillot R."/>
            <person name="Steward K.F."/>
            <person name="Webb K."/>
            <person name="Ainslie F."/>
            <person name="Jourdan T."/>
            <person name="Bason N.C."/>
            <person name="Holroyd N.E."/>
            <person name="Mungall K."/>
            <person name="Quail M.A."/>
            <person name="Sanders M."/>
            <person name="Simmonds M."/>
            <person name="Willey D."/>
            <person name="Brooks K."/>
            <person name="Aanensen D.M."/>
            <person name="Spratt B.G."/>
            <person name="Jolley K.A."/>
            <person name="Maiden M.C.J."/>
            <person name="Kehoe M."/>
            <person name="Chanter N."/>
            <person name="Bentley S.D."/>
            <person name="Robinson C."/>
            <person name="Maskell D.J."/>
            <person name="Parkhill J."/>
            <person name="Waller A.S."/>
        </authorList>
    </citation>
    <scope>NUCLEOTIDE SEQUENCE [LARGE SCALE GENOMIC DNA]</scope>
    <source>
        <strain>H70</strain>
    </source>
</reference>